<organism>
    <name type="scientific">Pseudotsuga menziesii</name>
    <name type="common">Douglas-fir</name>
    <name type="synonym">Abies menziesii</name>
    <dbReference type="NCBI Taxonomy" id="3357"/>
    <lineage>
        <taxon>Eukaryota</taxon>
        <taxon>Viridiplantae</taxon>
        <taxon>Streptophyta</taxon>
        <taxon>Embryophyta</taxon>
        <taxon>Tracheophyta</taxon>
        <taxon>Spermatophyta</taxon>
        <taxon>Pinopsida</taxon>
        <taxon>Pinidae</taxon>
        <taxon>Conifers I</taxon>
        <taxon>Pinales</taxon>
        <taxon>Pinaceae</taxon>
        <taxon>Pseudotsuga</taxon>
    </lineage>
</organism>
<comment type="similarity">
    <text evidence="1">Belongs to the eukaryotic ribosomal protein eL43 family.</text>
</comment>
<evidence type="ECO:0000305" key="1"/>
<gene>
    <name type="primary">RPL37A</name>
    <name type="synonym">5A1A.9</name>
</gene>
<name>RL37A_PSEMZ</name>
<keyword id="KW-0479">Metal-binding</keyword>
<keyword id="KW-0687">Ribonucleoprotein</keyword>
<keyword id="KW-0689">Ribosomal protein</keyword>
<keyword id="KW-0862">Zinc</keyword>
<keyword id="KW-0863">Zinc-finger</keyword>
<dbReference type="EMBL" id="AJ131732">
    <property type="protein sequence ID" value="CAA10493.1"/>
    <property type="molecule type" value="mRNA"/>
</dbReference>
<dbReference type="SMR" id="Q9ZRS8"/>
<dbReference type="GO" id="GO:1990904">
    <property type="term" value="C:ribonucleoprotein complex"/>
    <property type="evidence" value="ECO:0007669"/>
    <property type="project" value="UniProtKB-KW"/>
</dbReference>
<dbReference type="GO" id="GO:0005840">
    <property type="term" value="C:ribosome"/>
    <property type="evidence" value="ECO:0007669"/>
    <property type="project" value="UniProtKB-KW"/>
</dbReference>
<dbReference type="GO" id="GO:0003735">
    <property type="term" value="F:structural constituent of ribosome"/>
    <property type="evidence" value="ECO:0007669"/>
    <property type="project" value="InterPro"/>
</dbReference>
<dbReference type="GO" id="GO:0008270">
    <property type="term" value="F:zinc ion binding"/>
    <property type="evidence" value="ECO:0007669"/>
    <property type="project" value="UniProtKB-KW"/>
</dbReference>
<dbReference type="GO" id="GO:0006412">
    <property type="term" value="P:translation"/>
    <property type="evidence" value="ECO:0007669"/>
    <property type="project" value="InterPro"/>
</dbReference>
<dbReference type="FunFam" id="2.20.25.30:FF:000002">
    <property type="entry name" value="60S ribosomal protein L37a"/>
    <property type="match status" value="1"/>
</dbReference>
<dbReference type="Gene3D" id="2.20.25.30">
    <property type="match status" value="1"/>
</dbReference>
<dbReference type="HAMAP" id="MF_00327">
    <property type="entry name" value="Ribosomal_eL43"/>
    <property type="match status" value="1"/>
</dbReference>
<dbReference type="InterPro" id="IPR011331">
    <property type="entry name" value="Ribosomal_eL37/eL43"/>
</dbReference>
<dbReference type="InterPro" id="IPR002674">
    <property type="entry name" value="Ribosomal_eL43"/>
</dbReference>
<dbReference type="InterPro" id="IPR011332">
    <property type="entry name" value="Ribosomal_zn-bd"/>
</dbReference>
<dbReference type="NCBIfam" id="TIGR00280">
    <property type="entry name" value="eL43_euk_arch"/>
    <property type="match status" value="1"/>
</dbReference>
<dbReference type="NCBIfam" id="NF003058">
    <property type="entry name" value="PRK03976.1"/>
    <property type="match status" value="1"/>
</dbReference>
<dbReference type="PANTHER" id="PTHR48149">
    <property type="entry name" value="60S RIBOSOMAL PROTEIN L37A-2"/>
    <property type="match status" value="1"/>
</dbReference>
<dbReference type="PANTHER" id="PTHR48149:SF1">
    <property type="entry name" value="LARGE RIBOSOMAL SUBUNIT PROTEIN EL43Y"/>
    <property type="match status" value="1"/>
</dbReference>
<dbReference type="Pfam" id="PF01780">
    <property type="entry name" value="Ribosomal_L37ae"/>
    <property type="match status" value="1"/>
</dbReference>
<dbReference type="SUPFAM" id="SSF57829">
    <property type="entry name" value="Zn-binding ribosomal proteins"/>
    <property type="match status" value="1"/>
</dbReference>
<proteinExistence type="inferred from homology"/>
<feature type="chain" id="PRO_0000139833" description="Large ribosomal subunit protein eL43">
    <location>
        <begin position="1"/>
        <end position="92"/>
    </location>
</feature>
<feature type="zinc finger region" description="C4-type">
    <location>
        <begin position="39"/>
        <end position="60"/>
    </location>
</feature>
<accession>Q9ZRS8</accession>
<reference key="1">
    <citation type="online journal article" date="1999" name="Plant Gene Register">
        <title>Characterization of a cDNA encoding a ribosomal protein (rpL37a) from Pseudotsuga menziesii.</title>
        <authorList>
            <person name="Iglesias R.G."/>
            <person name="Nicolas G."/>
            <person name="Babiano M.J."/>
        </authorList>
        <locator>PGR99-037</locator>
    </citation>
    <scope>NUCLEOTIDE SEQUENCE [MRNA]</scope>
</reference>
<protein>
    <recommendedName>
        <fullName evidence="1">Large ribosomal subunit protein eL43</fullName>
    </recommendedName>
    <alternativeName>
        <fullName>60S ribosomal protein L37a</fullName>
    </alternativeName>
</protein>
<sequence>MTKRTKKAGIVGKYGTRYGASLRKQIKKMEVSQHSKFFCEFCGKFAVKRKAVGIWGCKDCGKVKAGGAYTLNTPSAVTVRSTIRRLREQTEG</sequence>